<proteinExistence type="evidence at protein level"/>
<reference key="1">
    <citation type="journal article" date="2003" name="Mamm. Genome">
        <title>Evolutionary analysis of a cluster of ATP-binding cassette (ABC) genes.</title>
        <authorList>
            <person name="Annilo T."/>
            <person name="Chen Z.-Q."/>
            <person name="Shulenin S."/>
            <person name="Dean M."/>
        </authorList>
    </citation>
    <scope>NUCLEOTIDE SEQUENCE [MRNA] (ISOFORM 1)</scope>
    <scope>TISSUE SPECIFICITY</scope>
    <scope>DEVELOPMENTAL STAGE</scope>
    <source>
        <strain>BALB/cJ</strain>
    </source>
</reference>
<reference key="2">
    <citation type="journal article" date="2004" name="DNA Res.">
        <title>Prediction of the coding sequences of mouse homologues of KIAA gene: IV. The complete nucleotide sequences of 500 mouse KIAA-homologous cDNAs identified by screening of terminal sequences of cDNA clones randomly sampled from size-fractionated libraries.</title>
        <authorList>
            <person name="Okazaki N."/>
            <person name="Kikuno R."/>
            <person name="Ohara R."/>
            <person name="Inamoto S."/>
            <person name="Koseki H."/>
            <person name="Hiraoka S."/>
            <person name="Saga Y."/>
            <person name="Seino S."/>
            <person name="Nishimura M."/>
            <person name="Kaisho T."/>
            <person name="Hoshino K."/>
            <person name="Kitamura H."/>
            <person name="Nagase T."/>
            <person name="Ohara O."/>
            <person name="Koga H."/>
        </authorList>
    </citation>
    <scope>NUCLEOTIDE SEQUENCE [LARGE SCALE MRNA] (ISOFORM 2)</scope>
    <source>
        <tissue>Pancreatic islet</tissue>
    </source>
</reference>
<reference key="3">
    <citation type="journal article" date="2009" name="PLoS Biol.">
        <title>Lineage-specific biology revealed by a finished genome assembly of the mouse.</title>
        <authorList>
            <person name="Church D.M."/>
            <person name="Goodstadt L."/>
            <person name="Hillier L.W."/>
            <person name="Zody M.C."/>
            <person name="Goldstein S."/>
            <person name="She X."/>
            <person name="Bult C.J."/>
            <person name="Agarwala R."/>
            <person name="Cherry J.L."/>
            <person name="DiCuccio M."/>
            <person name="Hlavina W."/>
            <person name="Kapustin Y."/>
            <person name="Meric P."/>
            <person name="Maglott D."/>
            <person name="Birtle Z."/>
            <person name="Marques A.C."/>
            <person name="Graves T."/>
            <person name="Zhou S."/>
            <person name="Teague B."/>
            <person name="Potamousis K."/>
            <person name="Churas C."/>
            <person name="Place M."/>
            <person name="Herschleb J."/>
            <person name="Runnheim R."/>
            <person name="Forrest D."/>
            <person name="Amos-Landgraf J."/>
            <person name="Schwartz D.C."/>
            <person name="Cheng Z."/>
            <person name="Lindblad-Toh K."/>
            <person name="Eichler E.E."/>
            <person name="Ponting C.P."/>
        </authorList>
    </citation>
    <scope>NUCLEOTIDE SEQUENCE [LARGE SCALE GENOMIC DNA]</scope>
    <source>
        <strain>C57BL/6J</strain>
    </source>
</reference>
<reference key="4">
    <citation type="journal article" date="2005" name="Science">
        <title>The transcriptional landscape of the mammalian genome.</title>
        <authorList>
            <person name="Carninci P."/>
            <person name="Kasukawa T."/>
            <person name="Katayama S."/>
            <person name="Gough J."/>
            <person name="Frith M.C."/>
            <person name="Maeda N."/>
            <person name="Oyama R."/>
            <person name="Ravasi T."/>
            <person name="Lenhard B."/>
            <person name="Wells C."/>
            <person name="Kodzius R."/>
            <person name="Shimokawa K."/>
            <person name="Bajic V.B."/>
            <person name="Brenner S.E."/>
            <person name="Batalov S."/>
            <person name="Forrest A.R."/>
            <person name="Zavolan M."/>
            <person name="Davis M.J."/>
            <person name="Wilming L.G."/>
            <person name="Aidinis V."/>
            <person name="Allen J.E."/>
            <person name="Ambesi-Impiombato A."/>
            <person name="Apweiler R."/>
            <person name="Aturaliya R.N."/>
            <person name="Bailey T.L."/>
            <person name="Bansal M."/>
            <person name="Baxter L."/>
            <person name="Beisel K.W."/>
            <person name="Bersano T."/>
            <person name="Bono H."/>
            <person name="Chalk A.M."/>
            <person name="Chiu K.P."/>
            <person name="Choudhary V."/>
            <person name="Christoffels A."/>
            <person name="Clutterbuck D.R."/>
            <person name="Crowe M.L."/>
            <person name="Dalla E."/>
            <person name="Dalrymple B.P."/>
            <person name="de Bono B."/>
            <person name="Della Gatta G."/>
            <person name="di Bernardo D."/>
            <person name="Down T."/>
            <person name="Engstrom P."/>
            <person name="Fagiolini M."/>
            <person name="Faulkner G."/>
            <person name="Fletcher C.F."/>
            <person name="Fukushima T."/>
            <person name="Furuno M."/>
            <person name="Futaki S."/>
            <person name="Gariboldi M."/>
            <person name="Georgii-Hemming P."/>
            <person name="Gingeras T.R."/>
            <person name="Gojobori T."/>
            <person name="Green R.E."/>
            <person name="Gustincich S."/>
            <person name="Harbers M."/>
            <person name="Hayashi Y."/>
            <person name="Hensch T.K."/>
            <person name="Hirokawa N."/>
            <person name="Hill D."/>
            <person name="Huminiecki L."/>
            <person name="Iacono M."/>
            <person name="Ikeo K."/>
            <person name="Iwama A."/>
            <person name="Ishikawa T."/>
            <person name="Jakt M."/>
            <person name="Kanapin A."/>
            <person name="Katoh M."/>
            <person name="Kawasawa Y."/>
            <person name="Kelso J."/>
            <person name="Kitamura H."/>
            <person name="Kitano H."/>
            <person name="Kollias G."/>
            <person name="Krishnan S.P."/>
            <person name="Kruger A."/>
            <person name="Kummerfeld S.K."/>
            <person name="Kurochkin I.V."/>
            <person name="Lareau L.F."/>
            <person name="Lazarevic D."/>
            <person name="Lipovich L."/>
            <person name="Liu J."/>
            <person name="Liuni S."/>
            <person name="McWilliam S."/>
            <person name="Madan Babu M."/>
            <person name="Madera M."/>
            <person name="Marchionni L."/>
            <person name="Matsuda H."/>
            <person name="Matsuzawa S."/>
            <person name="Miki H."/>
            <person name="Mignone F."/>
            <person name="Miyake S."/>
            <person name="Morris K."/>
            <person name="Mottagui-Tabar S."/>
            <person name="Mulder N."/>
            <person name="Nakano N."/>
            <person name="Nakauchi H."/>
            <person name="Ng P."/>
            <person name="Nilsson R."/>
            <person name="Nishiguchi S."/>
            <person name="Nishikawa S."/>
            <person name="Nori F."/>
            <person name="Ohara O."/>
            <person name="Okazaki Y."/>
            <person name="Orlando V."/>
            <person name="Pang K.C."/>
            <person name="Pavan W.J."/>
            <person name="Pavesi G."/>
            <person name="Pesole G."/>
            <person name="Petrovsky N."/>
            <person name="Piazza S."/>
            <person name="Reed J."/>
            <person name="Reid J.F."/>
            <person name="Ring B.Z."/>
            <person name="Ringwald M."/>
            <person name="Rost B."/>
            <person name="Ruan Y."/>
            <person name="Salzberg S.L."/>
            <person name="Sandelin A."/>
            <person name="Schneider C."/>
            <person name="Schoenbach C."/>
            <person name="Sekiguchi K."/>
            <person name="Semple C.A."/>
            <person name="Seno S."/>
            <person name="Sessa L."/>
            <person name="Sheng Y."/>
            <person name="Shibata Y."/>
            <person name="Shimada H."/>
            <person name="Shimada K."/>
            <person name="Silva D."/>
            <person name="Sinclair B."/>
            <person name="Sperling S."/>
            <person name="Stupka E."/>
            <person name="Sugiura K."/>
            <person name="Sultana R."/>
            <person name="Takenaka Y."/>
            <person name="Taki K."/>
            <person name="Tammoja K."/>
            <person name="Tan S.L."/>
            <person name="Tang S."/>
            <person name="Taylor M.S."/>
            <person name="Tegner J."/>
            <person name="Teichmann S.A."/>
            <person name="Ueda H.R."/>
            <person name="van Nimwegen E."/>
            <person name="Verardo R."/>
            <person name="Wei C.L."/>
            <person name="Yagi K."/>
            <person name="Yamanishi H."/>
            <person name="Zabarovsky E."/>
            <person name="Zhu S."/>
            <person name="Zimmer A."/>
            <person name="Hide W."/>
            <person name="Bult C."/>
            <person name="Grimmond S.M."/>
            <person name="Teasdale R.D."/>
            <person name="Liu E.T."/>
            <person name="Brusic V."/>
            <person name="Quackenbush J."/>
            <person name="Wahlestedt C."/>
            <person name="Mattick J.S."/>
            <person name="Hume D.A."/>
            <person name="Kai C."/>
            <person name="Sasaki D."/>
            <person name="Tomaru Y."/>
            <person name="Fukuda S."/>
            <person name="Kanamori-Katayama M."/>
            <person name="Suzuki M."/>
            <person name="Aoki J."/>
            <person name="Arakawa T."/>
            <person name="Iida J."/>
            <person name="Imamura K."/>
            <person name="Itoh M."/>
            <person name="Kato T."/>
            <person name="Kawaji H."/>
            <person name="Kawagashira N."/>
            <person name="Kawashima T."/>
            <person name="Kojima M."/>
            <person name="Kondo S."/>
            <person name="Konno H."/>
            <person name="Nakano K."/>
            <person name="Ninomiya N."/>
            <person name="Nishio T."/>
            <person name="Okada M."/>
            <person name="Plessy C."/>
            <person name="Shibata K."/>
            <person name="Shiraki T."/>
            <person name="Suzuki S."/>
            <person name="Tagami M."/>
            <person name="Waki K."/>
            <person name="Watahiki A."/>
            <person name="Okamura-Oho Y."/>
            <person name="Suzuki H."/>
            <person name="Kawai J."/>
            <person name="Hayashizaki Y."/>
        </authorList>
    </citation>
    <scope>NUCLEOTIDE SEQUENCE [LARGE SCALE MRNA] OF 1415-1620 (ISOFORMS 1/2)</scope>
    <source>
        <strain>C57BL/6J</strain>
        <tissue>Brain cortex</tissue>
    </source>
</reference>
<reference key="5">
    <citation type="journal article" date="2000" name="Genomics">
        <title>Identification of 18 mouse ABC genes and characterization of the ABC superfamily in Mus musculus.</title>
        <authorList>
            <person name="Schriml L.M."/>
            <person name="Dean M."/>
        </authorList>
    </citation>
    <scope>NUCLEOTIDE SEQUENCE [MRNA] OF 1433-1620 (ISOFORMS 1/2)</scope>
</reference>
<reference key="6">
    <citation type="journal article" date="2005" name="Clin. Exp. Pharmacol. Physiol.">
        <title>Acute digoxin loading reduces ABCA8A mRNA expression in the mouse liver.</title>
        <authorList>
            <person name="Wakaumi M."/>
            <person name="Ishibashi K."/>
            <person name="Ando H."/>
            <person name="Kasanuki H."/>
            <person name="Tsuruoka S."/>
        </authorList>
    </citation>
    <scope>INDUCTION</scope>
</reference>
<reference key="7">
    <citation type="journal article" date="2010" name="Cell">
        <title>A tissue-specific atlas of mouse protein phosphorylation and expression.</title>
        <authorList>
            <person name="Huttlin E.L."/>
            <person name="Jedrychowski M.P."/>
            <person name="Elias J.E."/>
            <person name="Goswami T."/>
            <person name="Rad R."/>
            <person name="Beausoleil S.A."/>
            <person name="Villen J."/>
            <person name="Haas W."/>
            <person name="Sowa M.E."/>
            <person name="Gygi S.P."/>
        </authorList>
    </citation>
    <scope>IDENTIFICATION BY MASS SPECTROMETRY [LARGE SCALE ANALYSIS]</scope>
    <source>
        <tissue>Brain</tissue>
        <tissue>Heart</tissue>
        <tissue>Liver</tissue>
        <tissue>Lung</tissue>
    </source>
</reference>
<reference key="8">
    <citation type="journal article" date="2017" name="Arterioscler. Thromb. Vasc. Biol.">
        <title>ABCA8 Regulates Cholesterol Efflux and High-Density Lipoprotein Cholesterol Levels.</title>
        <authorList>
            <person name="Trigueros-Motos L."/>
            <person name="van Capelleveen J.C."/>
            <person name="Torta F."/>
            <person name="Castano D."/>
            <person name="Zhang L.H."/>
            <person name="Chai E.C."/>
            <person name="Kang M."/>
            <person name="Dimova L.G."/>
            <person name="Schimmel A.W.M."/>
            <person name="Tietjen I."/>
            <person name="Radomski C."/>
            <person name="Tan L.J."/>
            <person name="Thiam C.H."/>
            <person name="Narayanaswamy P."/>
            <person name="Wu D.H."/>
            <person name="Dorninger F."/>
            <person name="Yakala G.K."/>
            <person name="Barhdadi A."/>
            <person name="Angeli V."/>
            <person name="Dube M.P."/>
            <person name="Berger J."/>
            <person name="Dallinga-Thie G.M."/>
            <person name="Tietge U.J.F."/>
            <person name="Wenk M.R."/>
            <person name="Hayden M.R."/>
            <person name="Hovingh G.K."/>
            <person name="Singaraja R.R."/>
        </authorList>
    </citation>
    <scope>FUNCTION</scope>
    <scope>TISSUE SPECIFICITY</scope>
</reference>
<reference key="9">
    <citation type="journal article" date="2018" name="Mol. Pharm.">
        <title>ATP-Binding Cassette Transporter A Subfamily 8 Is a Sinusoidal Efflux Transporter for Cholesterol and Taurocholate in Mouse and Human Liver.</title>
        <authorList>
            <person name="Sasaki K."/>
            <person name="Tachikawa M."/>
            <person name="Uchida Y."/>
            <person name="Hirano S."/>
            <person name="Kadowaki F."/>
            <person name="Watanabe M."/>
            <person name="Ohtsuki S."/>
            <person name="Terasaki T."/>
        </authorList>
    </citation>
    <scope>TISSUE SPECIFICITY</scope>
    <scope>IDENTIFICATION BY MASS SPECTROMETRY</scope>
    <scope>SUBCELLULAR LOCATION</scope>
</reference>
<organism>
    <name type="scientific">Mus musculus</name>
    <name type="common">Mouse</name>
    <dbReference type="NCBI Taxonomy" id="10090"/>
    <lineage>
        <taxon>Eukaryota</taxon>
        <taxon>Metazoa</taxon>
        <taxon>Chordata</taxon>
        <taxon>Craniata</taxon>
        <taxon>Vertebrata</taxon>
        <taxon>Euteleostomi</taxon>
        <taxon>Mammalia</taxon>
        <taxon>Eutheria</taxon>
        <taxon>Euarchontoglires</taxon>
        <taxon>Glires</taxon>
        <taxon>Rodentia</taxon>
        <taxon>Myomorpha</taxon>
        <taxon>Muroidea</taxon>
        <taxon>Muridae</taxon>
        <taxon>Murinae</taxon>
        <taxon>Mus</taxon>
        <taxon>Mus</taxon>
    </lineage>
</organism>
<protein>
    <recommendedName>
        <fullName evidence="9">ABC-type organic anion transporter ABCA8B</fullName>
        <ecNumber evidence="1">7.6.2.-</ecNumber>
    </recommendedName>
    <alternativeName>
        <fullName evidence="9">ATP-binding cassette sub-family A member 8B</fullName>
    </alternativeName>
</protein>
<gene>
    <name evidence="10" type="primary">Abca8b</name>
    <name type="synonym">Abca8</name>
    <name type="synonym">Kiaa0822</name>
</gene>
<keyword id="KW-0025">Alternative splicing</keyword>
<keyword id="KW-0067">ATP-binding</keyword>
<keyword id="KW-1003">Cell membrane</keyword>
<keyword id="KW-0325">Glycoprotein</keyword>
<keyword id="KW-0445">Lipid transport</keyword>
<keyword id="KW-0472">Membrane</keyword>
<keyword id="KW-0547">Nucleotide-binding</keyword>
<keyword id="KW-1185">Reference proteome</keyword>
<keyword id="KW-0677">Repeat</keyword>
<keyword id="KW-1278">Translocase</keyword>
<keyword id="KW-0812">Transmembrane</keyword>
<keyword id="KW-1133">Transmembrane helix</keyword>
<keyword id="KW-0813">Transport</keyword>
<evidence type="ECO:0000250" key="1">
    <source>
        <dbReference type="UniProtKB" id="O94911"/>
    </source>
</evidence>
<evidence type="ECO:0000255" key="2"/>
<evidence type="ECO:0000255" key="3">
    <source>
        <dbReference type="PROSITE-ProRule" id="PRU00434"/>
    </source>
</evidence>
<evidence type="ECO:0000269" key="4">
    <source>
    </source>
</evidence>
<evidence type="ECO:0000269" key="5">
    <source>
    </source>
</evidence>
<evidence type="ECO:0000269" key="6">
    <source>
    </source>
</evidence>
<evidence type="ECO:0000269" key="7">
    <source>
    </source>
</evidence>
<evidence type="ECO:0000303" key="8">
    <source>
    </source>
</evidence>
<evidence type="ECO:0000305" key="9"/>
<evidence type="ECO:0000312" key="10">
    <source>
        <dbReference type="MGI" id="MGI:1351668"/>
    </source>
</evidence>
<dbReference type="EC" id="7.6.2.-" evidence="1"/>
<dbReference type="EMBL" id="AF498362">
    <property type="protein sequence ID" value="AAM90908.1"/>
    <property type="molecule type" value="mRNA"/>
</dbReference>
<dbReference type="EMBL" id="AK173034">
    <property type="protein sequence ID" value="BAD32312.1"/>
    <property type="status" value="ALT_INIT"/>
    <property type="molecule type" value="mRNA"/>
</dbReference>
<dbReference type="EMBL" id="AL807245">
    <property type="status" value="NOT_ANNOTATED_CDS"/>
    <property type="molecule type" value="Genomic_DNA"/>
</dbReference>
<dbReference type="EMBL" id="AK043744">
    <property type="protein sequence ID" value="BAC31640.1"/>
    <property type="molecule type" value="mRNA"/>
</dbReference>
<dbReference type="EMBL" id="AF213393">
    <property type="protein sequence ID" value="AAF31432.1"/>
    <property type="molecule type" value="mRNA"/>
</dbReference>
<dbReference type="CCDS" id="CCDS25587.1">
    <molecule id="Q8K440-1"/>
</dbReference>
<dbReference type="CCDS" id="CCDS88278.1">
    <molecule id="Q8K440-2"/>
</dbReference>
<dbReference type="RefSeq" id="NP_001349678.1">
    <molecule id="Q8K440-2"/>
    <property type="nucleotide sequence ID" value="NM_001362749.2"/>
</dbReference>
<dbReference type="RefSeq" id="NP_001412409.1">
    <molecule id="Q8K440-1"/>
    <property type="nucleotide sequence ID" value="NM_001425480.1"/>
</dbReference>
<dbReference type="RefSeq" id="NP_038879.2">
    <molecule id="Q8K440-1"/>
    <property type="nucleotide sequence ID" value="NM_013851.4"/>
</dbReference>
<dbReference type="RefSeq" id="XP_006533522.1">
    <property type="nucleotide sequence ID" value="XM_006533459.3"/>
</dbReference>
<dbReference type="RefSeq" id="XP_006533525.1">
    <property type="nucleotide sequence ID" value="XM_006533462.3"/>
</dbReference>
<dbReference type="RefSeq" id="XP_006533526.1">
    <molecule id="Q8K440-2"/>
    <property type="nucleotide sequence ID" value="XM_006533463.3"/>
</dbReference>
<dbReference type="SMR" id="Q8K440"/>
<dbReference type="BioGRID" id="205211">
    <property type="interactions" value="8"/>
</dbReference>
<dbReference type="FunCoup" id="Q8K440">
    <property type="interactions" value="75"/>
</dbReference>
<dbReference type="IntAct" id="Q8K440">
    <property type="interactions" value="1"/>
</dbReference>
<dbReference type="MINT" id="Q8K440"/>
<dbReference type="STRING" id="10090.ENSMUSP00000020948"/>
<dbReference type="GlyCosmos" id="Q8K440">
    <property type="glycosylation" value="1 site, No reported glycans"/>
</dbReference>
<dbReference type="GlyGen" id="Q8K440">
    <property type="glycosylation" value="4 sites, 2 N-linked glycans (2 sites)"/>
</dbReference>
<dbReference type="iPTMnet" id="Q8K440"/>
<dbReference type="PhosphoSitePlus" id="Q8K440"/>
<dbReference type="SwissPalm" id="Q8K440"/>
<dbReference type="jPOST" id="Q8K440"/>
<dbReference type="PaxDb" id="10090-ENSMUSP00000020948"/>
<dbReference type="ProteomicsDB" id="285897">
    <molecule id="Q8K440-1"/>
</dbReference>
<dbReference type="ProteomicsDB" id="285898">
    <molecule id="Q8K440-2"/>
</dbReference>
<dbReference type="Antibodypedia" id="31802">
    <property type="antibodies" value="141 antibodies from 27 providers"/>
</dbReference>
<dbReference type="DNASU" id="27404"/>
<dbReference type="Ensembl" id="ENSMUST00000020948.15">
    <molecule id="Q8K440-1"/>
    <property type="protein sequence ID" value="ENSMUSP00000020948.9"/>
    <property type="gene ID" value="ENSMUSG00000020620.15"/>
</dbReference>
<dbReference type="Ensembl" id="ENSMUST00000106669.3">
    <molecule id="Q8K440-2"/>
    <property type="protein sequence ID" value="ENSMUSP00000102280.3"/>
    <property type="gene ID" value="ENSMUSG00000020620.15"/>
</dbReference>
<dbReference type="GeneID" id="27404"/>
<dbReference type="KEGG" id="mmu:27404"/>
<dbReference type="UCSC" id="uc007mdb.2">
    <molecule id="Q8K440-1"/>
    <property type="organism name" value="mouse"/>
</dbReference>
<dbReference type="UCSC" id="uc007mdc.2">
    <molecule id="Q8K440-2"/>
    <property type="organism name" value="mouse"/>
</dbReference>
<dbReference type="AGR" id="MGI:1351668"/>
<dbReference type="CTD" id="27404"/>
<dbReference type="MGI" id="MGI:1351668">
    <property type="gene designation" value="Abca8b"/>
</dbReference>
<dbReference type="VEuPathDB" id="HostDB:ENSMUSG00000020620"/>
<dbReference type="eggNOG" id="KOG0059">
    <property type="taxonomic scope" value="Eukaryota"/>
</dbReference>
<dbReference type="GeneTree" id="ENSGT00940000162012"/>
<dbReference type="HOGENOM" id="CLU_000604_19_1_1"/>
<dbReference type="InParanoid" id="Q8K440"/>
<dbReference type="OMA" id="GVCYHMP"/>
<dbReference type="OrthoDB" id="8061355at2759"/>
<dbReference type="PhylomeDB" id="Q8K440"/>
<dbReference type="TreeFam" id="TF105192"/>
<dbReference type="Reactome" id="R-MMU-382556">
    <property type="pathway name" value="ABC-family proteins mediated transport"/>
</dbReference>
<dbReference type="BioGRID-ORCS" id="27404">
    <property type="hits" value="2 hits in 76 CRISPR screens"/>
</dbReference>
<dbReference type="PRO" id="PR:Q8K440"/>
<dbReference type="Proteomes" id="UP000000589">
    <property type="component" value="Chromosome 11"/>
</dbReference>
<dbReference type="RNAct" id="Q8K440">
    <property type="molecule type" value="protein"/>
</dbReference>
<dbReference type="Bgee" id="ENSMUSG00000020620">
    <property type="expression patterns" value="Expressed in lumbar dorsal root ganglion and 86 other cell types or tissues"/>
</dbReference>
<dbReference type="ExpressionAtlas" id="Q8K440">
    <property type="expression patterns" value="baseline and differential"/>
</dbReference>
<dbReference type="GO" id="GO:0016323">
    <property type="term" value="C:basolateral plasma membrane"/>
    <property type="evidence" value="ECO:0000314"/>
    <property type="project" value="UniProtKB"/>
</dbReference>
<dbReference type="GO" id="GO:0005783">
    <property type="term" value="C:endoplasmic reticulum"/>
    <property type="evidence" value="ECO:0000250"/>
    <property type="project" value="UniProtKB"/>
</dbReference>
<dbReference type="GO" id="GO:0005743">
    <property type="term" value="C:mitochondrial inner membrane"/>
    <property type="evidence" value="ECO:0007005"/>
    <property type="project" value="MGI"/>
</dbReference>
<dbReference type="GO" id="GO:0005886">
    <property type="term" value="C:plasma membrane"/>
    <property type="evidence" value="ECO:0000250"/>
    <property type="project" value="UniProtKB"/>
</dbReference>
<dbReference type="GO" id="GO:0140359">
    <property type="term" value="F:ABC-type transporter activity"/>
    <property type="evidence" value="ECO:0000250"/>
    <property type="project" value="UniProtKB"/>
</dbReference>
<dbReference type="GO" id="GO:0008559">
    <property type="term" value="F:ABC-type xenobiotic transporter activity"/>
    <property type="evidence" value="ECO:0000250"/>
    <property type="project" value="UniProtKB"/>
</dbReference>
<dbReference type="GO" id="GO:0005524">
    <property type="term" value="F:ATP binding"/>
    <property type="evidence" value="ECO:0007669"/>
    <property type="project" value="UniProtKB-KW"/>
</dbReference>
<dbReference type="GO" id="GO:0016887">
    <property type="term" value="F:ATP hydrolysis activity"/>
    <property type="evidence" value="ECO:0007669"/>
    <property type="project" value="InterPro"/>
</dbReference>
<dbReference type="GO" id="GO:0033344">
    <property type="term" value="P:cholesterol efflux"/>
    <property type="evidence" value="ECO:0000250"/>
    <property type="project" value="UniProtKB"/>
</dbReference>
<dbReference type="GO" id="GO:0030301">
    <property type="term" value="P:cholesterol transport"/>
    <property type="evidence" value="ECO:0000250"/>
    <property type="project" value="UniProtKB"/>
</dbReference>
<dbReference type="GO" id="GO:0010875">
    <property type="term" value="P:positive regulation of cholesterol efflux"/>
    <property type="evidence" value="ECO:0000250"/>
    <property type="project" value="UniProtKB"/>
</dbReference>
<dbReference type="GO" id="GO:0010874">
    <property type="term" value="P:regulation of cholesterol efflux"/>
    <property type="evidence" value="ECO:0000250"/>
    <property type="project" value="UniProtKB"/>
</dbReference>
<dbReference type="GO" id="GO:0006686">
    <property type="term" value="P:sphingomyelin biosynthetic process"/>
    <property type="evidence" value="ECO:0000250"/>
    <property type="project" value="UniProtKB"/>
</dbReference>
<dbReference type="GO" id="GO:0006855">
    <property type="term" value="P:xenobiotic transmembrane transport"/>
    <property type="evidence" value="ECO:0000266"/>
    <property type="project" value="MGI"/>
</dbReference>
<dbReference type="GO" id="GO:0042908">
    <property type="term" value="P:xenobiotic transport"/>
    <property type="evidence" value="ECO:0000250"/>
    <property type="project" value="UniProtKB"/>
</dbReference>
<dbReference type="CDD" id="cd03263">
    <property type="entry name" value="ABC_subfamily_A"/>
    <property type="match status" value="2"/>
</dbReference>
<dbReference type="FunFam" id="3.40.50.300:FF:000335">
    <property type="entry name" value="ATP binding cassette subfamily A member 5"/>
    <property type="match status" value="1"/>
</dbReference>
<dbReference type="FunFam" id="3.40.50.300:FF:000436">
    <property type="entry name" value="ATP binding cassette subfamily A member 9"/>
    <property type="match status" value="1"/>
</dbReference>
<dbReference type="Gene3D" id="3.40.50.300">
    <property type="entry name" value="P-loop containing nucleotide triphosphate hydrolases"/>
    <property type="match status" value="2"/>
</dbReference>
<dbReference type="InterPro" id="IPR003593">
    <property type="entry name" value="AAA+_ATPase"/>
</dbReference>
<dbReference type="InterPro" id="IPR013525">
    <property type="entry name" value="ABC2_TM"/>
</dbReference>
<dbReference type="InterPro" id="IPR003439">
    <property type="entry name" value="ABC_transporter-like_ATP-bd"/>
</dbReference>
<dbReference type="InterPro" id="IPR017871">
    <property type="entry name" value="ABC_transporter-like_CS"/>
</dbReference>
<dbReference type="InterPro" id="IPR026082">
    <property type="entry name" value="ABCA"/>
</dbReference>
<dbReference type="InterPro" id="IPR027417">
    <property type="entry name" value="P-loop_NTPase"/>
</dbReference>
<dbReference type="InterPro" id="IPR056264">
    <property type="entry name" value="R2_ABCA1-4-like"/>
</dbReference>
<dbReference type="PANTHER" id="PTHR19229:SF274">
    <property type="entry name" value="ABC-TYPE ORGANIC ANION TRANSPORTER ABCA8"/>
    <property type="match status" value="1"/>
</dbReference>
<dbReference type="PANTHER" id="PTHR19229">
    <property type="entry name" value="ATP-BINDING CASSETTE TRANSPORTER SUBFAMILY A ABCA"/>
    <property type="match status" value="1"/>
</dbReference>
<dbReference type="Pfam" id="PF12698">
    <property type="entry name" value="ABC2_membrane_3"/>
    <property type="match status" value="2"/>
</dbReference>
<dbReference type="Pfam" id="PF00005">
    <property type="entry name" value="ABC_tran"/>
    <property type="match status" value="2"/>
</dbReference>
<dbReference type="Pfam" id="PF23321">
    <property type="entry name" value="R1_ABCA1"/>
    <property type="match status" value="1"/>
</dbReference>
<dbReference type="SMART" id="SM00382">
    <property type="entry name" value="AAA"/>
    <property type="match status" value="2"/>
</dbReference>
<dbReference type="SUPFAM" id="SSF52540">
    <property type="entry name" value="P-loop containing nucleoside triphosphate hydrolases"/>
    <property type="match status" value="2"/>
</dbReference>
<dbReference type="PROSITE" id="PS00211">
    <property type="entry name" value="ABC_TRANSPORTER_1"/>
    <property type="match status" value="1"/>
</dbReference>
<dbReference type="PROSITE" id="PS50893">
    <property type="entry name" value="ABC_TRANSPORTER_2"/>
    <property type="match status" value="2"/>
</dbReference>
<feature type="chain" id="PRO_0000250679" description="ABC-type organic anion transporter ABCA8B">
    <location>
        <begin position="1"/>
        <end position="1620"/>
    </location>
</feature>
<feature type="transmembrane region" description="Helical" evidence="2">
    <location>
        <begin position="30"/>
        <end position="50"/>
    </location>
</feature>
<feature type="transmembrane region" description="Helical" evidence="2">
    <location>
        <begin position="223"/>
        <end position="243"/>
    </location>
</feature>
<feature type="transmembrane region" description="Helical" evidence="2">
    <location>
        <begin position="267"/>
        <end position="287"/>
    </location>
</feature>
<feature type="transmembrane region" description="Helical" evidence="2">
    <location>
        <begin position="298"/>
        <end position="318"/>
    </location>
</feature>
<feature type="transmembrane region" description="Helical" evidence="2">
    <location>
        <begin position="326"/>
        <end position="346"/>
    </location>
</feature>
<feature type="transmembrane region" description="Helical" evidence="2">
    <location>
        <begin position="352"/>
        <end position="372"/>
    </location>
</feature>
<feature type="transmembrane region" description="Helical" evidence="2">
    <location>
        <begin position="396"/>
        <end position="416"/>
    </location>
</feature>
<feature type="transmembrane region" description="Helical" evidence="2">
    <location>
        <begin position="860"/>
        <end position="880"/>
    </location>
</feature>
<feature type="transmembrane region" description="Helical" evidence="2">
    <location>
        <begin position="979"/>
        <end position="999"/>
    </location>
</feature>
<feature type="transmembrane region" description="Helical" evidence="2">
    <location>
        <begin position="1023"/>
        <end position="1043"/>
    </location>
</feature>
<feature type="transmembrane region" description="Helical" evidence="2">
    <location>
        <begin position="1069"/>
        <end position="1089"/>
    </location>
</feature>
<feature type="transmembrane region" description="Helical" evidence="2">
    <location>
        <begin position="1105"/>
        <end position="1125"/>
    </location>
</feature>
<feature type="transmembrane region" description="Helical" evidence="2">
    <location>
        <begin position="1135"/>
        <end position="1155"/>
    </location>
</feature>
<feature type="transmembrane region" description="Helical" evidence="2">
    <location>
        <begin position="1164"/>
        <end position="1184"/>
    </location>
</feature>
<feature type="transmembrane region" description="Helical" evidence="2">
    <location>
        <begin position="1194"/>
        <end position="1214"/>
    </location>
</feature>
<feature type="domain" description="ABC transporter 1" evidence="3">
    <location>
        <begin position="479"/>
        <end position="714"/>
    </location>
</feature>
<feature type="domain" description="ABC transporter 2" evidence="3">
    <location>
        <begin position="1283"/>
        <end position="1516"/>
    </location>
</feature>
<feature type="binding site" evidence="3">
    <location>
        <begin position="515"/>
        <end position="522"/>
    </location>
    <ligand>
        <name>ATP</name>
        <dbReference type="ChEBI" id="CHEBI:30616"/>
        <label>1</label>
    </ligand>
</feature>
<feature type="binding site" evidence="3">
    <location>
        <begin position="1321"/>
        <end position="1328"/>
    </location>
    <ligand>
        <name>ATP</name>
        <dbReference type="ChEBI" id="CHEBI:30616"/>
        <label>2</label>
    </ligand>
</feature>
<feature type="glycosylation site" description="N-linked (GlcNAc...) asparagine" evidence="2">
    <location>
        <position position="723"/>
    </location>
</feature>
<feature type="splice variant" id="VSP_020704" description="In isoform 2." evidence="8">
    <location>
        <begin position="313"/>
        <end position="374"/>
    </location>
</feature>
<feature type="sequence conflict" description="In Ref. 1; AAM90908." evidence="9" ref="1">
    <original>D</original>
    <variation>G</variation>
    <location>
        <position position="985"/>
    </location>
</feature>
<feature type="sequence conflict" description="In Ref. 5; AAF31432." evidence="9" ref="5">
    <original>D</original>
    <variation>V</variation>
    <location>
        <position position="1447"/>
    </location>
</feature>
<accession>Q8K440</accession>
<accession>A2AM55</accession>
<accession>Q69ZY4</accession>
<accession>Q8BRQ1</accession>
<accession>Q9JL38</accession>
<sequence length="1620" mass="183039">MIKREISVRQQTCALLQKNLLKKWRLKRESLMEWVSSLLLLLFLYWYPHGHGATDLSSVPTKDLGRVDSFRQSGFMIGYTPVTSMTQQIMEKVAATPFMADKKVLGLLDEENIKELTESHAEIIRVIFSDTFSYHLKFQFDQRIPTSRELRDHNAHCDGLYEDVNCLIAIFWKEGFVALQAAINAAIIETTTNHSVMEELLSVSGKFMKIHPFVRQEGILTDFFIFTCIISFSPITYYVSINVARERKRMKGLMMMMGLRDPAFWLSWGLLYAGFVFIMALSLALVIKSVQFFILTSFMVVFSLFLLYGLSMITLAFLMSALVRKSVLTGLSVFLLTIFWGSLGFTSLYRYLPAPVEWTLSLFSPFAFTLGMAQLLRVDYDLNSNAPPDPASGSNLIIATNFMLVFDAFLYLALMMYFEKVLPNEYGHQHSPLFFLKSSFWLQTRKPAHVILEDGIDPVPSSGDSFEPVSPEFHGKESIRIRNISKEYKGKPNKIEALKDLTLDIYEGQITAVLGHSGAGKSTLLNILSGLSVPTKGSVTIYNNNLSEMADLENILRIAGVCPQANVQFDFLTVRENLRLFAKIRGIPPQDVEKEVQRVLLELEMKNIQNILAQNLSGGQKRKLTFGIAILGDSQIFLLDEPTAGLDPFSRHRVWNLLKERRADRVVLFSTQFMDEADILADRKVFISNGRLKCAGSSLFLKKKWGVGYHLSLQLKEVCVPENITSLVKQHIPAAKLSAEGEGKLLYTLPLETTYRFPELCQSLDSCPGLGIENYGVSMTTLNEVFLKLEGKASIDEPEVDIVGEGQTERSGDTERLMEMEQTLSSLRETEKTDGMALWRQQTCAIAKVRLLKLKHERKTLLSVLLILVVGICPFLFENISTKIRQSSYTWELSPHDYFLAPGQQPQGMLTQLLIINKTEASIDDFIHSVERQNIALEVDASGTRDGTDDPSYNGALIVSGNEKNHSFSFACNTKRLNCFPVLMDILSNGLLGMVKPSARIQTDRSTYLMDETIHPLEDLWKTAFWLILTSACPPYIAMSSVTDYKNRAWFQLRVSGLFPSAYWVGQAMVDIPLYCFVFLFMSLMDYLFRFPDTMFSIISHVIQIPCSVGYAISLIFLTYVISFISRKGKKNSGIWSLSFYIITVFSVAVILLAFDVDGTQYYIIFLIPPSTLVGCLILSLHLFIGQIFEEGQVIEPFLVFLIPFLHVFIFIFTLRCLEWKFGKKTMRKDPIFRISPRNNDVYQNPEEPEDEDEDVQMERMRTANALVSTSFDEKPVIIASCLRKEYAGKQKHCLSKKKAKIATRNVSFCVRKGEILGLLGHNGAGKSTSLKMISGDTKVTAGQVLLKGSREGDTPGFLGYCPQENALWPNLTVKEHLEIFAAVRGLRKSHAAVAITRLADALKLQDQLKSPVKTLSEGVKRKLCFVLSILGNPSILLLDEPSTGLDPEGQQQIWQAIRAIIKNTDRGALLTTHYMAEAEALCDRVAILVSGRLRCIGSIQHLKSKFGKDYLLEMKVKTLEQVEPLNTEILRLFPQASRQERYSSLMAYKLPVEAVQPLSQAFFKLEKVKQTFDLEEYSLSQSTLEQVFLELSKEQELDGLELEELDSSIKWKLLPQEEA</sequence>
<name>ABC8B_MOUSE</name>
<comment type="function">
    <text evidence="1 6">Mediates cholesterol and taurocholate efflux (PubMed:28882873). Through the interaction with ABCA1 potentiates the cholesterol efflux to lipid-free APOA1, in turn regulates high-density lipoprotein cholesterol levels (By similarity).</text>
</comment>
<comment type="catalytic activity">
    <reaction evidence="1">
        <text>taurocholate(in) + ATP + H2O = taurocholate(out) + ADP + phosphate + H(+)</text>
        <dbReference type="Rhea" id="RHEA:50052"/>
        <dbReference type="ChEBI" id="CHEBI:15377"/>
        <dbReference type="ChEBI" id="CHEBI:15378"/>
        <dbReference type="ChEBI" id="CHEBI:30616"/>
        <dbReference type="ChEBI" id="CHEBI:36257"/>
        <dbReference type="ChEBI" id="CHEBI:43474"/>
        <dbReference type="ChEBI" id="CHEBI:456216"/>
    </reaction>
    <physiologicalReaction direction="left-to-right" evidence="1">
        <dbReference type="Rhea" id="RHEA:50053"/>
    </physiologicalReaction>
</comment>
<comment type="catalytic activity">
    <reaction evidence="1">
        <text>cholesterol(in) + ATP + H2O = cholesterol(out) + ADP + phosphate + H(+)</text>
        <dbReference type="Rhea" id="RHEA:39051"/>
        <dbReference type="ChEBI" id="CHEBI:15377"/>
        <dbReference type="ChEBI" id="CHEBI:15378"/>
        <dbReference type="ChEBI" id="CHEBI:16113"/>
        <dbReference type="ChEBI" id="CHEBI:30616"/>
        <dbReference type="ChEBI" id="CHEBI:43474"/>
        <dbReference type="ChEBI" id="CHEBI:456216"/>
    </reaction>
    <physiologicalReaction direction="left-to-right" evidence="1">
        <dbReference type="Rhea" id="RHEA:39052"/>
    </physiologicalReaction>
</comment>
<comment type="activity regulation">
    <text evidence="1">Cholesterol efflux is increased by extracellularly applied taurocholate.</text>
</comment>
<comment type="subcellular location">
    <subcellularLocation>
        <location evidence="1">Cell membrane</location>
        <topology evidence="1">Multi-pass membrane protein</topology>
    </subcellularLocation>
    <subcellularLocation>
        <location evidence="7">Basolateral cell membrane</location>
    </subcellularLocation>
    <text evidence="7">Predominantly expressed on the sinusoidal plasma membrane in hepatocytes.</text>
</comment>
<comment type="alternative products">
    <event type="alternative splicing"/>
    <isoform>
        <id>Q8K440-1</id>
        <name>1</name>
        <sequence type="displayed"/>
    </isoform>
    <isoform>
        <id>Q8K440-2</id>
        <name>2</name>
        <sequence type="described" ref="VSP_020704"/>
    </isoform>
</comment>
<comment type="tissue specificity">
    <text evidence="4 6 7">Expressed in heart, brain, lung, liver and skeletal muscle (PubMed:12532264). Highly expressed in the liver, and is also abundant in heart and skeletal muscle (PubMed:28882873). Highly expressed in liver (PubMed:29300488).</text>
</comment>
<comment type="developmental stage">
    <text evidence="4">Expressed during embryogenesis.</text>
</comment>
<comment type="induction">
    <text evidence="5">Down-regulated by digoxin.</text>
</comment>
<comment type="similarity">
    <text evidence="9">Belongs to the ABC transporter superfamily. ABCA family.</text>
</comment>
<comment type="sequence caution" evidence="9">
    <conflict type="erroneous initiation">
        <sequence resource="EMBL-CDS" id="BAD32312"/>
    </conflict>
</comment>